<comment type="function">
    <text evidence="1">Converts seryl-tRNA(Sec) to selenocysteinyl-tRNA(Sec) required for selenoprotein biosynthesis.</text>
</comment>
<comment type="catalytic activity">
    <reaction evidence="1">
        <text>L-seryl-tRNA(Sec) + selenophosphate + H(+) = L-selenocysteinyl-tRNA(Sec) + phosphate</text>
        <dbReference type="Rhea" id="RHEA:22728"/>
        <dbReference type="Rhea" id="RHEA-COMP:9742"/>
        <dbReference type="Rhea" id="RHEA-COMP:9743"/>
        <dbReference type="ChEBI" id="CHEBI:15378"/>
        <dbReference type="ChEBI" id="CHEBI:16144"/>
        <dbReference type="ChEBI" id="CHEBI:43474"/>
        <dbReference type="ChEBI" id="CHEBI:78533"/>
        <dbReference type="ChEBI" id="CHEBI:78573"/>
        <dbReference type="EC" id="2.9.1.1"/>
    </reaction>
</comment>
<comment type="cofactor">
    <cofactor evidence="1">
        <name>pyridoxal 5'-phosphate</name>
        <dbReference type="ChEBI" id="CHEBI:597326"/>
    </cofactor>
</comment>
<comment type="pathway">
    <text evidence="1">Aminoacyl-tRNA biosynthesis; selenocysteinyl-tRNA(Sec) biosynthesis; selenocysteinyl-tRNA(Sec) from L-seryl-tRNA(Sec) (bacterial route): step 1/1.</text>
</comment>
<comment type="subunit">
    <text evidence="1">Homodecamer; pentamer of dimers. Binds only one seryl-tRNA(Sec) per dimer.</text>
</comment>
<comment type="subcellular location">
    <subcellularLocation>
        <location evidence="1">Cytoplasm</location>
    </subcellularLocation>
</comment>
<comment type="similarity">
    <text evidence="1">Belongs to the SelA family.</text>
</comment>
<proteinExistence type="inferred from homology"/>
<accession>A6TFJ1</accession>
<sequence>MTTEIRALYTRLPAIDRLLRDPAFSPLLAQHGHSQVVAQLRQMLDEAREQISQRQTLPDWSHDWQHACEQRLTAGQRSALRPVFNLTGTVLHTNLGRAIQAESAVEAVASAMRAPVTLEYDLDDAGRGHRDRAIADLLCQITGAEDACIVNNNAAAVLLMLAATASGREVVVSRGELVEIGGAFRIPDVMRQAGCQLHEVGTTNRTHAKDYRQAVNDNTALLMKVHTSNYSIEGFTKAVDEAELAAIGRELDVPVVADLGSGSLVDLSQYGLPKEPMPQEMIAAGVSLVSFSGDKLLGGPQAGIIVGKRALIAQLQSHPLKRALRADKMTLAALEATLRLYQHPEALREKLPTLRLLTRPAEEIRRLAERLQPDLAAHYADFAVSVAACQSQIGSGSLPVDRLPSAALTFTPHDGRGSRLEALAARWRALPCPVIGRIYDGRLWLDLRCLEDETRFMEMLLR</sequence>
<evidence type="ECO:0000255" key="1">
    <source>
        <dbReference type="HAMAP-Rule" id="MF_00423"/>
    </source>
</evidence>
<reference key="1">
    <citation type="submission" date="2006-09" db="EMBL/GenBank/DDBJ databases">
        <authorList>
            <consortium name="The Klebsiella pneumonia Genome Sequencing Project"/>
            <person name="McClelland M."/>
            <person name="Sanderson E.K."/>
            <person name="Spieth J."/>
            <person name="Clifton W.S."/>
            <person name="Latreille P."/>
            <person name="Sabo A."/>
            <person name="Pepin K."/>
            <person name="Bhonagiri V."/>
            <person name="Porwollik S."/>
            <person name="Ali J."/>
            <person name="Wilson R.K."/>
        </authorList>
    </citation>
    <scope>NUCLEOTIDE SEQUENCE [LARGE SCALE GENOMIC DNA]</scope>
    <source>
        <strain>ATCC 700721 / MGH 78578</strain>
    </source>
</reference>
<name>SELA_KLEP7</name>
<feature type="chain" id="PRO_1000050370" description="L-seryl-tRNA(Sec) selenium transferase">
    <location>
        <begin position="1"/>
        <end position="462"/>
    </location>
</feature>
<feature type="modified residue" description="N6-(pyridoxal phosphate)lysine" evidence="1">
    <location>
        <position position="295"/>
    </location>
</feature>
<organism>
    <name type="scientific">Klebsiella pneumoniae subsp. pneumoniae (strain ATCC 700721 / MGH 78578)</name>
    <dbReference type="NCBI Taxonomy" id="272620"/>
    <lineage>
        <taxon>Bacteria</taxon>
        <taxon>Pseudomonadati</taxon>
        <taxon>Pseudomonadota</taxon>
        <taxon>Gammaproteobacteria</taxon>
        <taxon>Enterobacterales</taxon>
        <taxon>Enterobacteriaceae</taxon>
        <taxon>Klebsiella/Raoultella group</taxon>
        <taxon>Klebsiella</taxon>
        <taxon>Klebsiella pneumoniae complex</taxon>
    </lineage>
</organism>
<keyword id="KW-0963">Cytoplasm</keyword>
<keyword id="KW-0648">Protein biosynthesis</keyword>
<keyword id="KW-0663">Pyridoxal phosphate</keyword>
<keyword id="KW-0711">Selenium</keyword>
<keyword id="KW-0808">Transferase</keyword>
<dbReference type="EC" id="2.9.1.1" evidence="1"/>
<dbReference type="EMBL" id="CP000647">
    <property type="protein sequence ID" value="ABR79325.1"/>
    <property type="molecule type" value="Genomic_DNA"/>
</dbReference>
<dbReference type="RefSeq" id="WP_004186109.1">
    <property type="nucleotide sequence ID" value="NC_009648.1"/>
</dbReference>
<dbReference type="SMR" id="A6TFJ1"/>
<dbReference type="STRING" id="272620.KPN_03939"/>
<dbReference type="PaxDb" id="272620-KPN_03939"/>
<dbReference type="EnsemblBacteria" id="ABR79325">
    <property type="protein sequence ID" value="ABR79325"/>
    <property type="gene ID" value="KPN_03939"/>
</dbReference>
<dbReference type="KEGG" id="kpn:KPN_03939"/>
<dbReference type="HOGENOM" id="CLU_038142_1_0_6"/>
<dbReference type="UniPathway" id="UPA00906">
    <property type="reaction ID" value="UER00896"/>
</dbReference>
<dbReference type="Proteomes" id="UP000000265">
    <property type="component" value="Chromosome"/>
</dbReference>
<dbReference type="GO" id="GO:0005737">
    <property type="term" value="C:cytoplasm"/>
    <property type="evidence" value="ECO:0007669"/>
    <property type="project" value="UniProtKB-SubCell"/>
</dbReference>
<dbReference type="GO" id="GO:0004125">
    <property type="term" value="F:L-seryl-tRNA(Sec) selenium transferase activity"/>
    <property type="evidence" value="ECO:0007669"/>
    <property type="project" value="UniProtKB-UniRule"/>
</dbReference>
<dbReference type="GO" id="GO:0001717">
    <property type="term" value="P:conversion of seryl-tRNAsec to selenocys-tRNAsec"/>
    <property type="evidence" value="ECO:0007669"/>
    <property type="project" value="UniProtKB-UniRule"/>
</dbReference>
<dbReference type="GO" id="GO:0001514">
    <property type="term" value="P:selenocysteine incorporation"/>
    <property type="evidence" value="ECO:0007669"/>
    <property type="project" value="UniProtKB-UniRule"/>
</dbReference>
<dbReference type="FunFam" id="3.40.640.10:FF:000028">
    <property type="entry name" value="L-seryl-tRNA(Sec) selenium transferase"/>
    <property type="match status" value="1"/>
</dbReference>
<dbReference type="Gene3D" id="3.90.1150.180">
    <property type="match status" value="1"/>
</dbReference>
<dbReference type="Gene3D" id="3.40.640.10">
    <property type="entry name" value="Type I PLP-dependent aspartate aminotransferase-like (Major domain)"/>
    <property type="match status" value="1"/>
</dbReference>
<dbReference type="HAMAP" id="MF_00423">
    <property type="entry name" value="SelA"/>
    <property type="match status" value="1"/>
</dbReference>
<dbReference type="InterPro" id="IPR015424">
    <property type="entry name" value="PyrdxlP-dep_Trfase"/>
</dbReference>
<dbReference type="InterPro" id="IPR015421">
    <property type="entry name" value="PyrdxlP-dep_Trfase_major"/>
</dbReference>
<dbReference type="InterPro" id="IPR018319">
    <property type="entry name" value="SelA-like"/>
</dbReference>
<dbReference type="InterPro" id="IPR004534">
    <property type="entry name" value="SelA_trans"/>
</dbReference>
<dbReference type="InterPro" id="IPR025862">
    <property type="entry name" value="SelA_trans_N_dom"/>
</dbReference>
<dbReference type="NCBIfam" id="TIGR00474">
    <property type="entry name" value="selA"/>
    <property type="match status" value="1"/>
</dbReference>
<dbReference type="PANTHER" id="PTHR32328">
    <property type="entry name" value="L-SERYL-TRNA(SEC) SELENIUM TRANSFERASE"/>
    <property type="match status" value="1"/>
</dbReference>
<dbReference type="PANTHER" id="PTHR32328:SF0">
    <property type="entry name" value="L-SERYL-TRNA(SEC) SELENIUM TRANSFERASE"/>
    <property type="match status" value="1"/>
</dbReference>
<dbReference type="Pfam" id="PF12390">
    <property type="entry name" value="Se-cys_synth_N"/>
    <property type="match status" value="1"/>
</dbReference>
<dbReference type="Pfam" id="PF03841">
    <property type="entry name" value="SelA"/>
    <property type="match status" value="1"/>
</dbReference>
<dbReference type="SUPFAM" id="SSF53383">
    <property type="entry name" value="PLP-dependent transferases"/>
    <property type="match status" value="1"/>
</dbReference>
<protein>
    <recommendedName>
        <fullName evidence="1">L-seryl-tRNA(Sec) selenium transferase</fullName>
        <ecNumber evidence="1">2.9.1.1</ecNumber>
    </recommendedName>
    <alternativeName>
        <fullName evidence="1">Selenocysteine synthase</fullName>
        <shortName evidence="1">Sec synthase</shortName>
    </alternativeName>
    <alternativeName>
        <fullName evidence="1">Selenocysteinyl-tRNA(Sec) synthase</fullName>
    </alternativeName>
</protein>
<gene>
    <name evidence="1" type="primary">selA</name>
    <name type="ordered locus">KPN78578_39010</name>
    <name type="ORF">KPN_03939</name>
</gene>